<dbReference type="EC" id="7.6.2.-" evidence="1"/>
<dbReference type="EMBL" id="CP000075">
    <property type="protein sequence ID" value="AAY37012.1"/>
    <property type="molecule type" value="Genomic_DNA"/>
</dbReference>
<dbReference type="RefSeq" id="WP_011267356.1">
    <property type="nucleotide sequence ID" value="NC_007005.1"/>
</dbReference>
<dbReference type="RefSeq" id="YP_235050.1">
    <property type="nucleotide sequence ID" value="NC_007005.1"/>
</dbReference>
<dbReference type="SMR" id="Q4ZV10"/>
<dbReference type="STRING" id="205918.Psyr_1969"/>
<dbReference type="KEGG" id="psb:Psyr_1969"/>
<dbReference type="PATRIC" id="fig|205918.7.peg.2011"/>
<dbReference type="eggNOG" id="COG0577">
    <property type="taxonomic scope" value="Bacteria"/>
</dbReference>
<dbReference type="eggNOG" id="COG1136">
    <property type="taxonomic scope" value="Bacteria"/>
</dbReference>
<dbReference type="HOGENOM" id="CLU_000604_78_2_6"/>
<dbReference type="OrthoDB" id="9770036at2"/>
<dbReference type="Proteomes" id="UP000000426">
    <property type="component" value="Chromosome"/>
</dbReference>
<dbReference type="GO" id="GO:0005886">
    <property type="term" value="C:plasma membrane"/>
    <property type="evidence" value="ECO:0007669"/>
    <property type="project" value="UniProtKB-SubCell"/>
</dbReference>
<dbReference type="GO" id="GO:0005524">
    <property type="term" value="F:ATP binding"/>
    <property type="evidence" value="ECO:0007669"/>
    <property type="project" value="UniProtKB-KW"/>
</dbReference>
<dbReference type="GO" id="GO:0016887">
    <property type="term" value="F:ATP hydrolysis activity"/>
    <property type="evidence" value="ECO:0007669"/>
    <property type="project" value="InterPro"/>
</dbReference>
<dbReference type="GO" id="GO:0022857">
    <property type="term" value="F:transmembrane transporter activity"/>
    <property type="evidence" value="ECO:0007669"/>
    <property type="project" value="TreeGrafter"/>
</dbReference>
<dbReference type="CDD" id="cd03255">
    <property type="entry name" value="ABC_MJ0796_LolCDE_FtsE"/>
    <property type="match status" value="1"/>
</dbReference>
<dbReference type="FunFam" id="3.40.50.300:FF:000032">
    <property type="entry name" value="Export ABC transporter ATP-binding protein"/>
    <property type="match status" value="1"/>
</dbReference>
<dbReference type="Gene3D" id="3.40.50.300">
    <property type="entry name" value="P-loop containing nucleotide triphosphate hydrolases"/>
    <property type="match status" value="1"/>
</dbReference>
<dbReference type="InterPro" id="IPR003593">
    <property type="entry name" value="AAA+_ATPase"/>
</dbReference>
<dbReference type="InterPro" id="IPR003838">
    <property type="entry name" value="ABC3_permease_C"/>
</dbReference>
<dbReference type="InterPro" id="IPR003439">
    <property type="entry name" value="ABC_transporter-like_ATP-bd"/>
</dbReference>
<dbReference type="InterPro" id="IPR017871">
    <property type="entry name" value="ABC_transporter-like_CS"/>
</dbReference>
<dbReference type="InterPro" id="IPR017911">
    <property type="entry name" value="MacB-like_ATP-bd"/>
</dbReference>
<dbReference type="InterPro" id="IPR025857">
    <property type="entry name" value="MacB_PCD"/>
</dbReference>
<dbReference type="InterPro" id="IPR050250">
    <property type="entry name" value="Macrolide_Exporter_MacB"/>
</dbReference>
<dbReference type="InterPro" id="IPR027417">
    <property type="entry name" value="P-loop_NTPase"/>
</dbReference>
<dbReference type="PANTHER" id="PTHR30572:SF14">
    <property type="entry name" value="MACROLIDE EXPORT ATP-BINDING_PERMEASE PROTEIN MACB"/>
    <property type="match status" value="1"/>
</dbReference>
<dbReference type="PANTHER" id="PTHR30572">
    <property type="entry name" value="MEMBRANE COMPONENT OF TRANSPORTER-RELATED"/>
    <property type="match status" value="1"/>
</dbReference>
<dbReference type="Pfam" id="PF00005">
    <property type="entry name" value="ABC_tran"/>
    <property type="match status" value="1"/>
</dbReference>
<dbReference type="Pfam" id="PF02687">
    <property type="entry name" value="FtsX"/>
    <property type="match status" value="1"/>
</dbReference>
<dbReference type="Pfam" id="PF12704">
    <property type="entry name" value="MacB_PCD"/>
    <property type="match status" value="1"/>
</dbReference>
<dbReference type="SMART" id="SM00382">
    <property type="entry name" value="AAA"/>
    <property type="match status" value="1"/>
</dbReference>
<dbReference type="SUPFAM" id="SSF52540">
    <property type="entry name" value="P-loop containing nucleoside triphosphate hydrolases"/>
    <property type="match status" value="1"/>
</dbReference>
<dbReference type="PROSITE" id="PS00211">
    <property type="entry name" value="ABC_TRANSPORTER_1"/>
    <property type="match status" value="1"/>
</dbReference>
<dbReference type="PROSITE" id="PS50893">
    <property type="entry name" value="ABC_TRANSPORTER_2"/>
    <property type="match status" value="1"/>
</dbReference>
<dbReference type="PROSITE" id="PS51267">
    <property type="entry name" value="MACB"/>
    <property type="match status" value="1"/>
</dbReference>
<accession>Q4ZV10</accession>
<proteinExistence type="inferred from homology"/>
<comment type="function">
    <text evidence="1 2">Part of the tripartite efflux system PvdRT-OpmQ required for the secretion into the extracellular milieu of the siderophore pyoverdine (PVD), which is involved in iron acquisition (By similarity). This subunit binds PVD and drives its secretion by hydrolyzing ATP (By similarity). The system is responsible for export of newly synthesized PVD after the final steps of biosynthesis have taken place in the periplasm (By similarity). It is also responsible for recycling of PVD after internalization of ferri-PVD into the periplasm by the outer-membrane receptor FpvA and release of iron from PVD, thus making PVD available for new cycles of iron uptake (By similarity).</text>
</comment>
<comment type="subunit">
    <text evidence="2">Part of the tripartite efflux system PvdRT-OpmQ, which is composed of an inner membrane component with both ATPase and permease domains, PvdT, a periplasmic membrane fusion protein, PvdR, and an outer membrane component, OpmQ.</text>
</comment>
<comment type="subcellular location">
    <subcellularLocation>
        <location evidence="1">Cell inner membrane</location>
        <topology evidence="3">Multi-pass membrane protein</topology>
    </subcellularLocation>
</comment>
<comment type="similarity">
    <text evidence="5">Belongs to the ABC transporter superfamily. Macrolide exporter (TC 3.A.1.122) family.</text>
</comment>
<reference key="1">
    <citation type="journal article" date="2005" name="Proc. Natl. Acad. Sci. U.S.A.">
        <title>Comparison of the complete genome sequences of Pseudomonas syringae pv. syringae B728a and pv. tomato DC3000.</title>
        <authorList>
            <person name="Feil H."/>
            <person name="Feil W.S."/>
            <person name="Chain P."/>
            <person name="Larimer F."/>
            <person name="Dibartolo G."/>
            <person name="Copeland A."/>
            <person name="Lykidis A."/>
            <person name="Trong S."/>
            <person name="Nolan M."/>
            <person name="Goltsman E."/>
            <person name="Thiel J."/>
            <person name="Malfatti S."/>
            <person name="Loper J.E."/>
            <person name="Lapidus A."/>
            <person name="Detter J.C."/>
            <person name="Land M."/>
            <person name="Richardson P.M."/>
            <person name="Kyrpides N.C."/>
            <person name="Ivanova N."/>
            <person name="Lindow S.E."/>
        </authorList>
    </citation>
    <scope>NUCLEOTIDE SEQUENCE [LARGE SCALE GENOMIC DNA]</scope>
    <source>
        <strain>B728a</strain>
    </source>
</reference>
<sequence length="657" mass="69870">MRTPLIDLRGIRKSYGGGDSPLVNVLRGIDLSIHTGEFVAIVGASGSGKSTLMNILGCLDRPTSGEYLFAGENVAALGSDELAWLRREAFGFVFQGYHLIPSGSAQENVEMPAIYAGTPAAERHARAAALLDRLGLASRTGNRPHQLSGGQQQRVSIARALMNGGHIILADEPTGALDSHSGAEVMTLLDELASQGHVVILITHDREVAARAKRVIEISDGLVISDTAQDASDVQRSVNPAALQAVDLRKRLSEGSGSQSAWQGELFDAIRAAWRVMWINRFRTALTLLGIVIGVASVVVMLAVGEGSKRQVMAQMSSFGSNIIYLNGKAPNPRAPKGVITLEEVAALGELPEVKMIMPVNGGQAGVRYGNLDHSSYVGGNDTHFPAIFNWPVVEGSYFSEADEQNAAAVAVIGYKVRQKLFGEQSDPVGQYILIENVPFQVVGVLQEKGATSGDLDSDNRIAIPYSSASIRLFGTQDPEYITIATRDANNVKQAEQSIRNLLQQLHHGKQDYELTNNAAMIQAEARTQNTLSLMLGSIAAISLLVGGIGVMNIMLMTVRERTREIGIRMATGARQSDILRQFLTEAVMLSVVGGLAGIVLALGMGAALLLSKVAVAFTLPAVAGAFACALITGVIFGFMPARKAARLDPVAALTSE</sequence>
<feature type="chain" id="PRO_0000269963" description="Pyoverdine export ATP-binding/permease protein PvdT">
    <location>
        <begin position="1"/>
        <end position="657"/>
    </location>
</feature>
<feature type="transmembrane region" description="Helical" evidence="3">
    <location>
        <begin position="285"/>
        <end position="305"/>
    </location>
</feature>
<feature type="transmembrane region" description="Helical" evidence="3">
    <location>
        <begin position="539"/>
        <end position="559"/>
    </location>
</feature>
<feature type="transmembrane region" description="Helical" evidence="3">
    <location>
        <begin position="590"/>
        <end position="610"/>
    </location>
</feature>
<feature type="transmembrane region" description="Helical" evidence="3">
    <location>
        <begin position="620"/>
        <end position="640"/>
    </location>
</feature>
<feature type="domain" description="ABC transporter" evidence="4">
    <location>
        <begin position="6"/>
        <end position="245"/>
    </location>
</feature>
<feature type="binding site" evidence="4">
    <location>
        <begin position="43"/>
        <end position="50"/>
    </location>
    <ligand>
        <name>ATP</name>
        <dbReference type="ChEBI" id="CHEBI:30616"/>
    </ligand>
</feature>
<name>PVDT_PSEU2</name>
<organism>
    <name type="scientific">Pseudomonas syringae pv. syringae (strain B728a)</name>
    <dbReference type="NCBI Taxonomy" id="205918"/>
    <lineage>
        <taxon>Bacteria</taxon>
        <taxon>Pseudomonadati</taxon>
        <taxon>Pseudomonadota</taxon>
        <taxon>Gammaproteobacteria</taxon>
        <taxon>Pseudomonadales</taxon>
        <taxon>Pseudomonadaceae</taxon>
        <taxon>Pseudomonas</taxon>
        <taxon>Pseudomonas syringae</taxon>
    </lineage>
</organism>
<gene>
    <name evidence="1" type="primary">pvdT</name>
    <name type="ordered locus">Psyr_1969</name>
</gene>
<keyword id="KW-0067">ATP-binding</keyword>
<keyword id="KW-0997">Cell inner membrane</keyword>
<keyword id="KW-1003">Cell membrane</keyword>
<keyword id="KW-0472">Membrane</keyword>
<keyword id="KW-0547">Nucleotide-binding</keyword>
<keyword id="KW-1278">Translocase</keyword>
<keyword id="KW-0812">Transmembrane</keyword>
<keyword id="KW-1133">Transmembrane helix</keyword>
<keyword id="KW-0813">Transport</keyword>
<evidence type="ECO:0000250" key="1">
    <source>
        <dbReference type="UniProtKB" id="Q88F88"/>
    </source>
</evidence>
<evidence type="ECO:0000250" key="2">
    <source>
        <dbReference type="UniProtKB" id="Q9I191"/>
    </source>
</evidence>
<evidence type="ECO:0000255" key="3"/>
<evidence type="ECO:0000255" key="4">
    <source>
        <dbReference type="PROSITE-ProRule" id="PRU00434"/>
    </source>
</evidence>
<evidence type="ECO:0000305" key="5"/>
<protein>
    <recommendedName>
        <fullName evidence="1">Pyoverdine export ATP-binding/permease protein PvdT</fullName>
        <ecNumber evidence="1">7.6.2.-</ecNumber>
    </recommendedName>
</protein>